<reference key="1">
    <citation type="journal article" date="2003" name="Nature">
        <title>The genome sequence of the filamentous fungus Neurospora crassa.</title>
        <authorList>
            <person name="Galagan J.E."/>
            <person name="Calvo S.E."/>
            <person name="Borkovich K.A."/>
            <person name="Selker E.U."/>
            <person name="Read N.D."/>
            <person name="Jaffe D.B."/>
            <person name="FitzHugh W."/>
            <person name="Ma L.-J."/>
            <person name="Smirnov S."/>
            <person name="Purcell S."/>
            <person name="Rehman B."/>
            <person name="Elkins T."/>
            <person name="Engels R."/>
            <person name="Wang S."/>
            <person name="Nielsen C.B."/>
            <person name="Butler J."/>
            <person name="Endrizzi M."/>
            <person name="Qui D."/>
            <person name="Ianakiev P."/>
            <person name="Bell-Pedersen D."/>
            <person name="Nelson M.A."/>
            <person name="Werner-Washburne M."/>
            <person name="Selitrennikoff C.P."/>
            <person name="Kinsey J.A."/>
            <person name="Braun E.L."/>
            <person name="Zelter A."/>
            <person name="Schulte U."/>
            <person name="Kothe G.O."/>
            <person name="Jedd G."/>
            <person name="Mewes H.-W."/>
            <person name="Staben C."/>
            <person name="Marcotte E."/>
            <person name="Greenberg D."/>
            <person name="Roy A."/>
            <person name="Foley K."/>
            <person name="Naylor J."/>
            <person name="Stange-Thomann N."/>
            <person name="Barrett R."/>
            <person name="Gnerre S."/>
            <person name="Kamal M."/>
            <person name="Kamvysselis M."/>
            <person name="Mauceli E.W."/>
            <person name="Bielke C."/>
            <person name="Rudd S."/>
            <person name="Frishman D."/>
            <person name="Krystofova S."/>
            <person name="Rasmussen C."/>
            <person name="Metzenberg R.L."/>
            <person name="Perkins D.D."/>
            <person name="Kroken S."/>
            <person name="Cogoni C."/>
            <person name="Macino G."/>
            <person name="Catcheside D.E.A."/>
            <person name="Li W."/>
            <person name="Pratt R.J."/>
            <person name="Osmani S.A."/>
            <person name="DeSouza C.P.C."/>
            <person name="Glass N.L."/>
            <person name="Orbach M.J."/>
            <person name="Berglund J.A."/>
            <person name="Voelker R."/>
            <person name="Yarden O."/>
            <person name="Plamann M."/>
            <person name="Seiler S."/>
            <person name="Dunlap J.C."/>
            <person name="Radford A."/>
            <person name="Aramayo R."/>
            <person name="Natvig D.O."/>
            <person name="Alex L.A."/>
            <person name="Mannhaupt G."/>
            <person name="Ebbole D.J."/>
            <person name="Freitag M."/>
            <person name="Paulsen I."/>
            <person name="Sachs M.S."/>
            <person name="Lander E.S."/>
            <person name="Nusbaum C."/>
            <person name="Birren B.W."/>
        </authorList>
    </citation>
    <scope>NUCLEOTIDE SEQUENCE [LARGE SCALE GENOMIC DNA]</scope>
    <source>
        <strain>ATCC 24698 / 74-OR23-1A / CBS 708.71 / DSM 1257 / FGSC 987</strain>
    </source>
</reference>
<organism>
    <name type="scientific">Neurospora crassa (strain ATCC 24698 / 74-OR23-1A / CBS 708.71 / DSM 1257 / FGSC 987)</name>
    <dbReference type="NCBI Taxonomy" id="367110"/>
    <lineage>
        <taxon>Eukaryota</taxon>
        <taxon>Fungi</taxon>
        <taxon>Dikarya</taxon>
        <taxon>Ascomycota</taxon>
        <taxon>Pezizomycotina</taxon>
        <taxon>Sordariomycetes</taxon>
        <taxon>Sordariomycetidae</taxon>
        <taxon>Sordariales</taxon>
        <taxon>Sordariaceae</taxon>
        <taxon>Neurospora</taxon>
    </lineage>
</organism>
<protein>
    <recommendedName>
        <fullName>Pre-mRNA-splicing factor cwc-21</fullName>
    </recommendedName>
</protein>
<proteinExistence type="inferred from homology"/>
<comment type="function">
    <text evidence="1">Involved in pre-mRNA splicing. May function at or prior to the first catalytic step of splicing at the catalytic center of the spliceosome. May do so by stabilizing the catalytic center or the position of the RNA substrate (By similarity).</text>
</comment>
<comment type="subunit">
    <text evidence="1">Associates with the NTC complex (or PRP19-associated complex). The NTC complex associates with the spliceosome after the release of the U1 and U4 snRNAs and forms the CWC spliceosome subcomplex reminiscent of a late-stage spliceosome.</text>
</comment>
<comment type="subcellular location">
    <subcellularLocation>
        <location evidence="1">Cytoplasm</location>
    </subcellularLocation>
    <subcellularLocation>
        <location evidence="1">Nucleus</location>
    </subcellularLocation>
</comment>
<comment type="similarity">
    <text evidence="4">Belongs to the CWC21 family.</text>
</comment>
<accession>Q7RYH7</accession>
<dbReference type="EMBL" id="CM002238">
    <property type="protein sequence ID" value="EAA27902.1"/>
    <property type="molecule type" value="Genomic_DNA"/>
</dbReference>
<dbReference type="RefSeq" id="XP_957138.1">
    <property type="nucleotide sequence ID" value="XM_952045.2"/>
</dbReference>
<dbReference type="SMR" id="Q7RYH7"/>
<dbReference type="STRING" id="367110.Q7RYH7"/>
<dbReference type="PaxDb" id="5141-EFNCRP00000006189"/>
<dbReference type="EnsemblFungi" id="EAA27902">
    <property type="protein sequence ID" value="EAA27902"/>
    <property type="gene ID" value="NCU06498"/>
</dbReference>
<dbReference type="GeneID" id="3873276"/>
<dbReference type="KEGG" id="ncr:NCU06498"/>
<dbReference type="VEuPathDB" id="FungiDB:NCU06498"/>
<dbReference type="HOGENOM" id="CLU_067891_0_1_1"/>
<dbReference type="InParanoid" id="Q7RYH7"/>
<dbReference type="OMA" id="GRSHYDG"/>
<dbReference type="OrthoDB" id="10267305at2759"/>
<dbReference type="Proteomes" id="UP000001805">
    <property type="component" value="Chromosome 3, Linkage Group III"/>
</dbReference>
<dbReference type="GO" id="GO:0005737">
    <property type="term" value="C:cytoplasm"/>
    <property type="evidence" value="ECO:0007669"/>
    <property type="project" value="UniProtKB-SubCell"/>
</dbReference>
<dbReference type="GO" id="GO:0005634">
    <property type="term" value="C:nucleus"/>
    <property type="evidence" value="ECO:0000318"/>
    <property type="project" value="GO_Central"/>
</dbReference>
<dbReference type="GO" id="GO:0005681">
    <property type="term" value="C:spliceosomal complex"/>
    <property type="evidence" value="ECO:0007669"/>
    <property type="project" value="UniProtKB-KW"/>
</dbReference>
<dbReference type="GO" id="GO:0006397">
    <property type="term" value="P:mRNA processing"/>
    <property type="evidence" value="ECO:0007669"/>
    <property type="project" value="UniProtKB-KW"/>
</dbReference>
<dbReference type="GO" id="GO:0008380">
    <property type="term" value="P:RNA splicing"/>
    <property type="evidence" value="ECO:0007669"/>
    <property type="project" value="UniProtKB-KW"/>
</dbReference>
<dbReference type="CDD" id="cd21372">
    <property type="entry name" value="cwf21_CWC21-like"/>
    <property type="match status" value="1"/>
</dbReference>
<dbReference type="Gene3D" id="6.10.140.420">
    <property type="match status" value="1"/>
</dbReference>
<dbReference type="InterPro" id="IPR051372">
    <property type="entry name" value="CWC21"/>
</dbReference>
<dbReference type="InterPro" id="IPR013170">
    <property type="entry name" value="mRNA_splic_Cwf21_dom"/>
</dbReference>
<dbReference type="PANTHER" id="PTHR36562">
    <property type="entry name" value="SERINE/ARGININE REPETITIVE MATRIX 2"/>
    <property type="match status" value="1"/>
</dbReference>
<dbReference type="PANTHER" id="PTHR36562:SF5">
    <property type="entry name" value="SERINE_ARGININE REPETITIVE MATRIX 2"/>
    <property type="match status" value="1"/>
</dbReference>
<dbReference type="Pfam" id="PF08312">
    <property type="entry name" value="cwf21"/>
    <property type="match status" value="1"/>
</dbReference>
<dbReference type="SMART" id="SM01115">
    <property type="entry name" value="cwf21"/>
    <property type="match status" value="1"/>
</dbReference>
<feature type="chain" id="PRO_0000123501" description="Pre-mRNA-splicing factor cwc-21">
    <location>
        <begin position="1"/>
        <end position="344"/>
    </location>
</feature>
<feature type="domain" description="CWF21" evidence="2">
    <location>
        <begin position="55"/>
        <end position="98"/>
    </location>
</feature>
<feature type="region of interest" description="Disordered" evidence="3">
    <location>
        <begin position="1"/>
        <end position="58"/>
    </location>
</feature>
<feature type="region of interest" description="Disordered" evidence="3">
    <location>
        <begin position="98"/>
        <end position="344"/>
    </location>
</feature>
<feature type="coiled-coil region" evidence="2">
    <location>
        <begin position="69"/>
        <end position="105"/>
    </location>
</feature>
<feature type="compositionally biased region" description="Polar residues" evidence="3">
    <location>
        <begin position="1"/>
        <end position="19"/>
    </location>
</feature>
<feature type="compositionally biased region" description="Basic and acidic residues" evidence="3">
    <location>
        <begin position="38"/>
        <end position="58"/>
    </location>
</feature>
<feature type="compositionally biased region" description="Basic and acidic residues" evidence="3">
    <location>
        <begin position="120"/>
        <end position="167"/>
    </location>
</feature>
<feature type="compositionally biased region" description="Basic and acidic residues" evidence="3">
    <location>
        <begin position="188"/>
        <end position="226"/>
    </location>
</feature>
<feature type="compositionally biased region" description="Basic and acidic residues" evidence="3">
    <location>
        <begin position="238"/>
        <end position="277"/>
    </location>
</feature>
<feature type="compositionally biased region" description="Basic residues" evidence="3">
    <location>
        <begin position="288"/>
        <end position="306"/>
    </location>
</feature>
<feature type="compositionally biased region" description="Basic and acidic residues" evidence="3">
    <location>
        <begin position="307"/>
        <end position="316"/>
    </location>
</feature>
<feature type="compositionally biased region" description="Basic and acidic residues" evidence="3">
    <location>
        <begin position="327"/>
        <end position="344"/>
    </location>
</feature>
<gene>
    <name type="primary">cwc-21</name>
    <name type="ORF">NCU06498</name>
</gene>
<keyword id="KW-0175">Coiled coil</keyword>
<keyword id="KW-0963">Cytoplasm</keyword>
<keyword id="KW-0507">mRNA processing</keyword>
<keyword id="KW-0508">mRNA splicing</keyword>
<keyword id="KW-0539">Nucleus</keyword>
<keyword id="KW-1185">Reference proteome</keyword>
<keyword id="KW-0747">Spliceosome</keyword>
<sequence>MSDNVGLSTPRGSGTSGYVQRNLAHFRPRDNYQSYPPKDFDSLKHQPRQPDKGLLEHDRKREVEVKVFELRDKLEEEGVEEDEIETRCDELRRKLLAEMERNQNSRGAPTGPRKNLKMHQVHELADAKIKESERLRQALKISRDYQEGSHWKKQEERLKGALEREANGDSSSMPPPPAPSGPSGGNDRGGDRDRGRGRGFGRRDRDEGRLNSRERRAPPRDWDRPPTPRGRGGRGGRGGRDREVDSYRGAAGRDRSRSRSPIRERSRTRSPVRDTGRSRSPVSERSLSRSRSRSRSYSRSRSPPRRRAADSQDRSLSRSRSRSYSRSPDRDRYREKYRDRDNRD</sequence>
<name>CWC21_NEUCR</name>
<evidence type="ECO:0000250" key="1"/>
<evidence type="ECO:0000255" key="2"/>
<evidence type="ECO:0000256" key="3">
    <source>
        <dbReference type="SAM" id="MobiDB-lite"/>
    </source>
</evidence>
<evidence type="ECO:0000305" key="4"/>